<evidence type="ECO:0000255" key="1"/>
<evidence type="ECO:0000255" key="2">
    <source>
        <dbReference type="PROSITE-ProRule" id="PRU00351"/>
    </source>
</evidence>
<evidence type="ECO:0000269" key="3">
    <source>
    </source>
</evidence>
<evidence type="ECO:0000269" key="4">
    <source>
    </source>
</evidence>
<evidence type="ECO:0000269" key="5">
    <source>
    </source>
</evidence>
<evidence type="ECO:0000269" key="6">
    <source>
    </source>
</evidence>
<evidence type="ECO:0000305" key="7"/>
<feature type="chain" id="PRO_0000208494" description="Innexin inx1">
    <location>
        <begin position="1"/>
        <end position="362"/>
    </location>
</feature>
<feature type="topological domain" description="Cytoplasmic" evidence="1">
    <location>
        <begin position="1"/>
        <end position="28"/>
    </location>
</feature>
<feature type="transmembrane region" description="Helical" evidence="2">
    <location>
        <begin position="29"/>
        <end position="49"/>
    </location>
</feature>
<feature type="topological domain" description="Extracellular" evidence="1">
    <location>
        <begin position="50"/>
        <end position="110"/>
    </location>
</feature>
<feature type="transmembrane region" description="Helical" evidence="2">
    <location>
        <begin position="111"/>
        <end position="131"/>
    </location>
</feature>
<feature type="topological domain" description="Cytoplasmic" evidence="1">
    <location>
        <begin position="132"/>
        <end position="177"/>
    </location>
</feature>
<feature type="transmembrane region" description="Helical" evidence="2">
    <location>
        <begin position="178"/>
        <end position="198"/>
    </location>
</feature>
<feature type="topological domain" description="Extracellular" evidence="1">
    <location>
        <begin position="199"/>
        <end position="267"/>
    </location>
</feature>
<feature type="transmembrane region" description="Helical" evidence="2">
    <location>
        <begin position="268"/>
        <end position="288"/>
    </location>
</feature>
<feature type="topological domain" description="Cytoplasmic" evidence="1">
    <location>
        <begin position="289"/>
        <end position="362"/>
    </location>
</feature>
<comment type="function">
    <text evidence="6">Structural component of the gap junctions. Essential for generation and/or maintenance of postembryonic neuroblasts and normal development of optic lobe.</text>
</comment>
<comment type="subunit">
    <text>Heterooligomer of Inx2 and ogre.</text>
</comment>
<comment type="subcellular location">
    <subcellularLocation>
        <location evidence="7">Cell membrane</location>
        <topology evidence="2">Multi-pass membrane protein</topology>
    </subcellularLocation>
    <subcellularLocation>
        <location>Cell junction</location>
        <location>Gap junction</location>
    </subcellularLocation>
    <subcellularLocation>
        <location>Basolateral cell membrane</location>
    </subcellularLocation>
    <text>Accumulates in the basolateral membrane of follicle cells in oocytes and epithelial cells in embryonic salivary gland and hindgut.</text>
</comment>
<comment type="tissue specificity">
    <text evidence="3 4 5 6">In ovary, expressed in follicle cells. Expressed around the periphery of the embryo during cellular blastoderm formation. Repeating epidermal pattern emerges from stage 11, high levels of expression detected along the borders of each segment from stage 13. At stage 13, expressed in the dorsal branch of the tracheal system. During stage 15, detected in a few cells at each of the branch points of the dorsal trunk and at low levels in cardioblasts. In embryos, also expressed in the salivary gland and the hindgut (at protein level). At stage 17, expressed in the dorsal side of the CNS. Expressed in the imaginal wing disk. Expressed in larval CNS and in tissues outside of the CNS. In pupae, expressed in the CNS and in primary, secondary and tertiary pigment cells of the retina.</text>
</comment>
<comment type="developmental stage">
    <text evidence="3">Expressed during embryogenesis. Embryonic expression commences during cellular blastoderm formation, increases rapidly after cellularization and is maintained during the early stages of gastrulation. Expressed in larvae and pupae.</text>
</comment>
<comment type="similarity">
    <text evidence="2">Belongs to the pannexin family.</text>
</comment>
<accession>P27716</accession>
<accession>Q0KHV4</accession>
<accession>Q9W3T8</accession>
<organism>
    <name type="scientific">Drosophila melanogaster</name>
    <name type="common">Fruit fly</name>
    <dbReference type="NCBI Taxonomy" id="7227"/>
    <lineage>
        <taxon>Eukaryota</taxon>
        <taxon>Metazoa</taxon>
        <taxon>Ecdysozoa</taxon>
        <taxon>Arthropoda</taxon>
        <taxon>Hexapoda</taxon>
        <taxon>Insecta</taxon>
        <taxon>Pterygota</taxon>
        <taxon>Neoptera</taxon>
        <taxon>Endopterygota</taxon>
        <taxon>Diptera</taxon>
        <taxon>Brachycera</taxon>
        <taxon>Muscomorpha</taxon>
        <taxon>Ephydroidea</taxon>
        <taxon>Drosophilidae</taxon>
        <taxon>Drosophila</taxon>
        <taxon>Sophophora</taxon>
    </lineage>
</organism>
<reference key="1">
    <citation type="journal article" date="1990" name="Genetics">
        <title>Molecular cloning and analysis of l(1)ogre, a locus of Drosophila melanogaster with prominent effects on the postembryonic development of the central nervous system.</title>
        <authorList>
            <person name="Watanabe T."/>
            <person name="Kankel D.R."/>
        </authorList>
    </citation>
    <scope>NUCLEOTIDE SEQUENCE [MRNA]</scope>
    <scope>FUNCTION</scope>
    <scope>TISSUE SPECIFICITY</scope>
    <source>
        <strain>Canton-S</strain>
        <strain>Oregon-R</strain>
        <tissue>Embryo</tissue>
    </source>
</reference>
<reference key="2">
    <citation type="journal article" date="2000" name="Science">
        <title>The genome sequence of Drosophila melanogaster.</title>
        <authorList>
            <person name="Adams M.D."/>
            <person name="Celniker S.E."/>
            <person name="Holt R.A."/>
            <person name="Evans C.A."/>
            <person name="Gocayne J.D."/>
            <person name="Amanatides P.G."/>
            <person name="Scherer S.E."/>
            <person name="Li P.W."/>
            <person name="Hoskins R.A."/>
            <person name="Galle R.F."/>
            <person name="George R.A."/>
            <person name="Lewis S.E."/>
            <person name="Richards S."/>
            <person name="Ashburner M."/>
            <person name="Henderson S.N."/>
            <person name="Sutton G.G."/>
            <person name="Wortman J.R."/>
            <person name="Yandell M.D."/>
            <person name="Zhang Q."/>
            <person name="Chen L.X."/>
            <person name="Brandon R.C."/>
            <person name="Rogers Y.-H.C."/>
            <person name="Blazej R.G."/>
            <person name="Champe M."/>
            <person name="Pfeiffer B.D."/>
            <person name="Wan K.H."/>
            <person name="Doyle C."/>
            <person name="Baxter E.G."/>
            <person name="Helt G."/>
            <person name="Nelson C.R."/>
            <person name="Miklos G.L.G."/>
            <person name="Abril J.F."/>
            <person name="Agbayani A."/>
            <person name="An H.-J."/>
            <person name="Andrews-Pfannkoch C."/>
            <person name="Baldwin D."/>
            <person name="Ballew R.M."/>
            <person name="Basu A."/>
            <person name="Baxendale J."/>
            <person name="Bayraktaroglu L."/>
            <person name="Beasley E.M."/>
            <person name="Beeson K.Y."/>
            <person name="Benos P.V."/>
            <person name="Berman B.P."/>
            <person name="Bhandari D."/>
            <person name="Bolshakov S."/>
            <person name="Borkova D."/>
            <person name="Botchan M.R."/>
            <person name="Bouck J."/>
            <person name="Brokstein P."/>
            <person name="Brottier P."/>
            <person name="Burtis K.C."/>
            <person name="Busam D.A."/>
            <person name="Butler H."/>
            <person name="Cadieu E."/>
            <person name="Center A."/>
            <person name="Chandra I."/>
            <person name="Cherry J.M."/>
            <person name="Cawley S."/>
            <person name="Dahlke C."/>
            <person name="Davenport L.B."/>
            <person name="Davies P."/>
            <person name="de Pablos B."/>
            <person name="Delcher A."/>
            <person name="Deng Z."/>
            <person name="Mays A.D."/>
            <person name="Dew I."/>
            <person name="Dietz S.M."/>
            <person name="Dodson K."/>
            <person name="Doup L.E."/>
            <person name="Downes M."/>
            <person name="Dugan-Rocha S."/>
            <person name="Dunkov B.C."/>
            <person name="Dunn P."/>
            <person name="Durbin K.J."/>
            <person name="Evangelista C.C."/>
            <person name="Ferraz C."/>
            <person name="Ferriera S."/>
            <person name="Fleischmann W."/>
            <person name="Fosler C."/>
            <person name="Gabrielian A.E."/>
            <person name="Garg N.S."/>
            <person name="Gelbart W.M."/>
            <person name="Glasser K."/>
            <person name="Glodek A."/>
            <person name="Gong F."/>
            <person name="Gorrell J.H."/>
            <person name="Gu Z."/>
            <person name="Guan P."/>
            <person name="Harris M."/>
            <person name="Harris N.L."/>
            <person name="Harvey D.A."/>
            <person name="Heiman T.J."/>
            <person name="Hernandez J.R."/>
            <person name="Houck J."/>
            <person name="Hostin D."/>
            <person name="Houston K.A."/>
            <person name="Howland T.J."/>
            <person name="Wei M.-H."/>
            <person name="Ibegwam C."/>
            <person name="Jalali M."/>
            <person name="Kalush F."/>
            <person name="Karpen G.H."/>
            <person name="Ke Z."/>
            <person name="Kennison J.A."/>
            <person name="Ketchum K.A."/>
            <person name="Kimmel B.E."/>
            <person name="Kodira C.D."/>
            <person name="Kraft C.L."/>
            <person name="Kravitz S."/>
            <person name="Kulp D."/>
            <person name="Lai Z."/>
            <person name="Lasko P."/>
            <person name="Lei Y."/>
            <person name="Levitsky A.A."/>
            <person name="Li J.H."/>
            <person name="Li Z."/>
            <person name="Liang Y."/>
            <person name="Lin X."/>
            <person name="Liu X."/>
            <person name="Mattei B."/>
            <person name="McIntosh T.C."/>
            <person name="McLeod M.P."/>
            <person name="McPherson D."/>
            <person name="Merkulov G."/>
            <person name="Milshina N.V."/>
            <person name="Mobarry C."/>
            <person name="Morris J."/>
            <person name="Moshrefi A."/>
            <person name="Mount S.M."/>
            <person name="Moy M."/>
            <person name="Murphy B."/>
            <person name="Murphy L."/>
            <person name="Muzny D.M."/>
            <person name="Nelson D.L."/>
            <person name="Nelson D.R."/>
            <person name="Nelson K.A."/>
            <person name="Nixon K."/>
            <person name="Nusskern D.R."/>
            <person name="Pacleb J.M."/>
            <person name="Palazzolo M."/>
            <person name="Pittman G.S."/>
            <person name="Pan S."/>
            <person name="Pollard J."/>
            <person name="Puri V."/>
            <person name="Reese M.G."/>
            <person name="Reinert K."/>
            <person name="Remington K."/>
            <person name="Saunders R.D.C."/>
            <person name="Scheeler F."/>
            <person name="Shen H."/>
            <person name="Shue B.C."/>
            <person name="Siden-Kiamos I."/>
            <person name="Simpson M."/>
            <person name="Skupski M.P."/>
            <person name="Smith T.J."/>
            <person name="Spier E."/>
            <person name="Spradling A.C."/>
            <person name="Stapleton M."/>
            <person name="Strong R."/>
            <person name="Sun E."/>
            <person name="Svirskas R."/>
            <person name="Tector C."/>
            <person name="Turner R."/>
            <person name="Venter E."/>
            <person name="Wang A.H."/>
            <person name="Wang X."/>
            <person name="Wang Z.-Y."/>
            <person name="Wassarman D.A."/>
            <person name="Weinstock G.M."/>
            <person name="Weissenbach J."/>
            <person name="Williams S.M."/>
            <person name="Woodage T."/>
            <person name="Worley K.C."/>
            <person name="Wu D."/>
            <person name="Yang S."/>
            <person name="Yao Q.A."/>
            <person name="Ye J."/>
            <person name="Yeh R.-F."/>
            <person name="Zaveri J.S."/>
            <person name="Zhan M."/>
            <person name="Zhang G."/>
            <person name="Zhao Q."/>
            <person name="Zheng L."/>
            <person name="Zheng X.H."/>
            <person name="Zhong F.N."/>
            <person name="Zhong W."/>
            <person name="Zhou X."/>
            <person name="Zhu S.C."/>
            <person name="Zhu X."/>
            <person name="Smith H.O."/>
            <person name="Gibbs R.A."/>
            <person name="Myers E.W."/>
            <person name="Rubin G.M."/>
            <person name="Venter J.C."/>
        </authorList>
    </citation>
    <scope>NUCLEOTIDE SEQUENCE [LARGE SCALE GENOMIC DNA]</scope>
    <source>
        <strain>Berkeley</strain>
    </source>
</reference>
<reference key="3">
    <citation type="journal article" date="2002" name="Genome Biol.">
        <title>Annotation of the Drosophila melanogaster euchromatic genome: a systematic review.</title>
        <authorList>
            <person name="Misra S."/>
            <person name="Crosby M.A."/>
            <person name="Mungall C.J."/>
            <person name="Matthews B.B."/>
            <person name="Campbell K.S."/>
            <person name="Hradecky P."/>
            <person name="Huang Y."/>
            <person name="Kaminker J.S."/>
            <person name="Millburn G.H."/>
            <person name="Prochnik S.E."/>
            <person name="Smith C.D."/>
            <person name="Tupy J.L."/>
            <person name="Whitfield E.J."/>
            <person name="Bayraktaroglu L."/>
            <person name="Berman B.P."/>
            <person name="Bettencourt B.R."/>
            <person name="Celniker S.E."/>
            <person name="de Grey A.D.N.J."/>
            <person name="Drysdale R.A."/>
            <person name="Harris N.L."/>
            <person name="Richter J."/>
            <person name="Russo S."/>
            <person name="Schroeder A.J."/>
            <person name="Shu S.Q."/>
            <person name="Stapleton M."/>
            <person name="Yamada C."/>
            <person name="Ashburner M."/>
            <person name="Gelbart W.M."/>
            <person name="Rubin G.M."/>
            <person name="Lewis S.E."/>
        </authorList>
    </citation>
    <scope>GENOME REANNOTATION</scope>
    <source>
        <strain>Berkeley</strain>
    </source>
</reference>
<reference key="4">
    <citation type="submission" date="2003-03" db="EMBL/GenBank/DDBJ databases">
        <authorList>
            <person name="Stapleton M."/>
            <person name="Brokstein P."/>
            <person name="Hong L."/>
            <person name="Agbayani A."/>
            <person name="Carlson J.W."/>
            <person name="Champe M."/>
            <person name="Chavez C."/>
            <person name="Dorsett V."/>
            <person name="Dresnek D."/>
            <person name="Farfan D."/>
            <person name="Frise E."/>
            <person name="George R.A."/>
            <person name="Gonzalez M."/>
            <person name="Guarin H."/>
            <person name="Kronmiller B."/>
            <person name="Li P.W."/>
            <person name="Liao G."/>
            <person name="Miranda A."/>
            <person name="Mungall C.J."/>
            <person name="Nunoo J."/>
            <person name="Pacleb J.M."/>
            <person name="Paragas V."/>
            <person name="Park S."/>
            <person name="Patel S."/>
            <person name="Phouanenavong S."/>
            <person name="Wan K.H."/>
            <person name="Yu C."/>
            <person name="Lewis S.E."/>
            <person name="Rubin G.M."/>
            <person name="Celniker S.E."/>
        </authorList>
    </citation>
    <scope>NUCLEOTIDE SEQUENCE [LARGE SCALE MRNA]</scope>
    <source>
        <strain>Berkeley</strain>
        <tissue>Head</tissue>
    </source>
</reference>
<reference key="5">
    <citation type="journal article" date="2002" name="Mech. Dev.">
        <title>Gap junctions in Drosophila: developmental expression of the entire innexin gene family.</title>
        <authorList>
            <person name="Stebbings L.A."/>
            <person name="Todman M.G."/>
            <person name="Phillips R."/>
            <person name="Greer C.E."/>
            <person name="Tam J."/>
            <person name="Phelan P."/>
            <person name="Jacobs K."/>
            <person name="Bacon J.P."/>
            <person name="Davies J.A."/>
        </authorList>
    </citation>
    <scope>TISSUE SPECIFICITY</scope>
    <scope>DEVELOPMENTAL STAGE</scope>
</reference>
<reference key="6">
    <citation type="journal article" date="2004" name="Mol. Biol. Cell">
        <title>Gap junction channel protein innexin 2 is essential for epithelial morphogenesis in the Drosophila embryo.</title>
        <authorList>
            <person name="Bauer R."/>
            <person name="Lehmann C."/>
            <person name="Martini J."/>
            <person name="Eckardt F."/>
            <person name="Hoch M."/>
        </authorList>
    </citation>
    <scope>SUBCELLULAR LOCATION</scope>
    <scope>TISSUE SPECIFICITY</scope>
</reference>
<reference key="7">
    <citation type="journal article" date="2008" name="BMC Dev. Biol.">
        <title>Gap junctions in the ovary of Drosophila melanogaster: localization of innexins 1, 2, 3 and 4 and evidence for intercellular communication via innexin-2 containing channels.</title>
        <authorList>
            <person name="Bohrmann J."/>
            <person name="Zimmermann J."/>
        </authorList>
    </citation>
    <scope>SUBCELLULAR LOCATION</scope>
    <scope>TISSUE SPECIFICITY</scope>
</reference>
<keyword id="KW-0965">Cell junction</keyword>
<keyword id="KW-1003">Cell membrane</keyword>
<keyword id="KW-0303">Gap junction</keyword>
<keyword id="KW-0407">Ion channel</keyword>
<keyword id="KW-0406">Ion transport</keyword>
<keyword id="KW-0472">Membrane</keyword>
<keyword id="KW-1185">Reference proteome</keyword>
<keyword id="KW-0812">Transmembrane</keyword>
<keyword id="KW-1133">Transmembrane helix</keyword>
<keyword id="KW-0813">Transport</keyword>
<name>INX1_DROME</name>
<dbReference type="EMBL" id="X61180">
    <property type="protein sequence ID" value="CAA43486.1"/>
    <property type="molecule type" value="mRNA"/>
</dbReference>
<dbReference type="EMBL" id="AE014298">
    <property type="protein sequence ID" value="AAF46225.1"/>
    <property type="molecule type" value="Genomic_DNA"/>
</dbReference>
<dbReference type="EMBL" id="BT004911">
    <property type="protein sequence ID" value="AAO49164.1"/>
    <property type="molecule type" value="mRNA"/>
</dbReference>
<dbReference type="PIR" id="S17285">
    <property type="entry name" value="S17285"/>
</dbReference>
<dbReference type="RefSeq" id="NP_001245557.1">
    <property type="nucleotide sequence ID" value="NM_001258628.3"/>
</dbReference>
<dbReference type="RefSeq" id="NP_001245558.1">
    <property type="nucleotide sequence ID" value="NM_001258629.2"/>
</dbReference>
<dbReference type="RefSeq" id="NP_001259299.1">
    <property type="nucleotide sequence ID" value="NM_001272370.1"/>
</dbReference>
<dbReference type="RefSeq" id="NP_001259300.1">
    <property type="nucleotide sequence ID" value="NM_001272371.1"/>
</dbReference>
<dbReference type="RefSeq" id="NP_524824.1">
    <property type="nucleotide sequence ID" value="NM_080085.5"/>
</dbReference>
<dbReference type="RefSeq" id="NP_727147.1">
    <property type="nucleotide sequence ID" value="NM_167101.3"/>
</dbReference>
<dbReference type="SMR" id="P27716"/>
<dbReference type="BioGRID" id="69639">
    <property type="interactions" value="3"/>
</dbReference>
<dbReference type="DIP" id="DIP-22933N"/>
<dbReference type="FunCoup" id="P27716">
    <property type="interactions" value="27"/>
</dbReference>
<dbReference type="IntAct" id="P27716">
    <property type="interactions" value="2"/>
</dbReference>
<dbReference type="STRING" id="7227.FBpp0306903"/>
<dbReference type="TCDB" id="1.A.25.1.3">
    <property type="family name" value="the gap junction-forming innexin (innexin) family"/>
</dbReference>
<dbReference type="PaxDb" id="7227-FBpp0301607"/>
<dbReference type="DNASU" id="45382"/>
<dbReference type="EnsemblMetazoa" id="FBtr0071036">
    <property type="protein sequence ID" value="FBpp0070995"/>
    <property type="gene ID" value="FBgn0004646"/>
</dbReference>
<dbReference type="EnsemblMetazoa" id="FBtr0071037">
    <property type="protein sequence ID" value="FBpp0070996"/>
    <property type="gene ID" value="FBgn0004646"/>
</dbReference>
<dbReference type="EnsemblMetazoa" id="FBtr0309873">
    <property type="protein sequence ID" value="FBpp0301607"/>
    <property type="gene ID" value="FBgn0004646"/>
</dbReference>
<dbReference type="EnsemblMetazoa" id="FBtr0309874">
    <property type="protein sequence ID" value="FBpp0301608"/>
    <property type="gene ID" value="FBgn0004646"/>
</dbReference>
<dbReference type="EnsemblMetazoa" id="FBtr0309875">
    <property type="protein sequence ID" value="FBpp0301609"/>
    <property type="gene ID" value="FBgn0004646"/>
</dbReference>
<dbReference type="EnsemblMetazoa" id="FBtr0334881">
    <property type="protein sequence ID" value="FBpp0306903"/>
    <property type="gene ID" value="FBgn0004646"/>
</dbReference>
<dbReference type="GeneID" id="45382"/>
<dbReference type="KEGG" id="dme:Dmel_CG3039"/>
<dbReference type="AGR" id="FB:FBgn0004646"/>
<dbReference type="CTD" id="45382"/>
<dbReference type="FlyBase" id="FBgn0004646">
    <property type="gene designation" value="ogre"/>
</dbReference>
<dbReference type="VEuPathDB" id="VectorBase:FBgn0004646"/>
<dbReference type="eggNOG" id="ENOG502QWKB">
    <property type="taxonomic scope" value="Eukaryota"/>
</dbReference>
<dbReference type="HOGENOM" id="CLU_035763_1_1_1"/>
<dbReference type="InParanoid" id="P27716"/>
<dbReference type="OMA" id="LGDWWIL"/>
<dbReference type="OrthoDB" id="5867527at2759"/>
<dbReference type="PhylomeDB" id="P27716"/>
<dbReference type="SignaLink" id="P27716"/>
<dbReference type="BioGRID-ORCS" id="45382">
    <property type="hits" value="0 hits in 1 CRISPR screen"/>
</dbReference>
<dbReference type="ChiTaRS" id="ogre">
    <property type="organism name" value="fly"/>
</dbReference>
<dbReference type="GenomeRNAi" id="45382"/>
<dbReference type="PRO" id="PR:P27716"/>
<dbReference type="Proteomes" id="UP000000803">
    <property type="component" value="Chromosome X"/>
</dbReference>
<dbReference type="Bgee" id="FBgn0004646">
    <property type="expression patterns" value="Expressed in nurse follicle cell (Drosophila) in ovary and 231 other cell types or tissues"/>
</dbReference>
<dbReference type="ExpressionAtlas" id="P27716">
    <property type="expression patterns" value="baseline and differential"/>
</dbReference>
<dbReference type="GO" id="GO:0016323">
    <property type="term" value="C:basolateral plasma membrane"/>
    <property type="evidence" value="ECO:0000314"/>
    <property type="project" value="FlyBase"/>
</dbReference>
<dbReference type="GO" id="GO:0005921">
    <property type="term" value="C:gap junction"/>
    <property type="evidence" value="ECO:0000314"/>
    <property type="project" value="FlyBase"/>
</dbReference>
<dbReference type="GO" id="GO:0016020">
    <property type="term" value="C:membrane"/>
    <property type="evidence" value="ECO:0000303"/>
    <property type="project" value="UniProtKB"/>
</dbReference>
<dbReference type="GO" id="GO:0005886">
    <property type="term" value="C:plasma membrane"/>
    <property type="evidence" value="ECO:0000250"/>
    <property type="project" value="UniProtKB"/>
</dbReference>
<dbReference type="GO" id="GO:0005243">
    <property type="term" value="F:gap junction channel activity"/>
    <property type="evidence" value="ECO:0000318"/>
    <property type="project" value="GO_Central"/>
</dbReference>
<dbReference type="GO" id="GO:0010496">
    <property type="term" value="P:intercellular transport"/>
    <property type="evidence" value="ECO:0000250"/>
    <property type="project" value="FlyBase"/>
</dbReference>
<dbReference type="GO" id="GO:0034220">
    <property type="term" value="P:monoatomic ion transmembrane transport"/>
    <property type="evidence" value="ECO:0007669"/>
    <property type="project" value="UniProtKB-KW"/>
</dbReference>
<dbReference type="GO" id="GO:0007602">
    <property type="term" value="P:phototransduction"/>
    <property type="evidence" value="ECO:0000315"/>
    <property type="project" value="FlyBase"/>
</dbReference>
<dbReference type="GO" id="GO:0007603">
    <property type="term" value="P:phototransduction, visible light"/>
    <property type="evidence" value="ECO:0000316"/>
    <property type="project" value="FlyBase"/>
</dbReference>
<dbReference type="GO" id="GO:0007632">
    <property type="term" value="P:visual behavior"/>
    <property type="evidence" value="ECO:0000250"/>
    <property type="project" value="FlyBase"/>
</dbReference>
<dbReference type="InterPro" id="IPR000990">
    <property type="entry name" value="Innexin"/>
</dbReference>
<dbReference type="PANTHER" id="PTHR11893">
    <property type="entry name" value="INNEXIN"/>
    <property type="match status" value="1"/>
</dbReference>
<dbReference type="PANTHER" id="PTHR11893:SF39">
    <property type="entry name" value="INNEXIN INX1"/>
    <property type="match status" value="1"/>
</dbReference>
<dbReference type="Pfam" id="PF00876">
    <property type="entry name" value="Innexin"/>
    <property type="match status" value="1"/>
</dbReference>
<dbReference type="PRINTS" id="PR01262">
    <property type="entry name" value="INNEXIN"/>
</dbReference>
<dbReference type="PROSITE" id="PS51013">
    <property type="entry name" value="PANNEXIN"/>
    <property type="match status" value="1"/>
</dbReference>
<gene>
    <name type="primary">ogre</name>
    <name type="synonym">inx1</name>
    <name type="synonym">l(1)ogre</name>
    <name type="ORF">CG3039</name>
</gene>
<protein>
    <recommendedName>
        <fullName>Innexin inx1</fullName>
        <shortName>Innexin-1</shortName>
    </recommendedName>
    <alternativeName>
        <fullName>Protein optic ganglion reduced</fullName>
        <shortName>Protein ogre</shortName>
    </alternativeName>
</protein>
<sequence>MYKLLGSLKSYLKWQDIQTDNAVFRLHNSFTTVLLLTCSLIITATQYVGQPISCIVNGVPPHVVNTFCWIHSTFTMPDAFRRQVGREVAHPGVANDFGDEDAKKYYTYYQWVCFVLFFQAMACYTPKFLWNKFEGGLMRMIVMGLNITICTREEKEAKRDALLDYLIKHVKRHKLYAIRYWACEFLCCINIIVQMYLMNRFFDGEFLSYGTNIMKLSDVPQEQRVDPMVYVFPRVTKCTFHKYGPSGSLQKHDSLCILPLNIVNEKTYVFIWFWFWILLVLLIGLIVFRGCIIFMPKFRPRLLNASNRMIPMEICRSLSRKLDIGDWWLIYMLGRNLDPVIYKDVMSEFAKQVEPSKHDRAK</sequence>
<proteinExistence type="evidence at protein level"/>